<sequence>MRAAVVTKDHKVSIEDKKLRALKPGEALVQTEYCGVCHTDLHVKNADFGDVTGVTLGHEGIGKVIEVAEDVESLKIGDRVSIAWMFESCGRCEYCTTGRETLCRSVKNAGYTVDGAMAEQVIVTADYAVKVPEKLDPAAASSITCAGVTTYKAVKVSNVKPGQWLGVFGIGGLGNLALQYAKNVMGAKIVAFDINDDKLAFAKELGADAIINSKDVDPVAEVMKLTDNKGLDATVVTSVAKTPFNQAVDVVKAGARVVAVGLPVDKMNLDIPRLVLDGIEVVGSLVGTRQDLREAFEFAAENKVTPKVQLRKLEEINDIFEEMENGTITGRMVIKF</sequence>
<evidence type="ECO:0000250" key="1"/>
<evidence type="ECO:0000305" key="2"/>
<feature type="chain" id="PRO_0000273040" description="Alcohol dehydrogenase">
    <location>
        <begin position="1"/>
        <end position="336"/>
    </location>
</feature>
<feature type="binding site" evidence="1">
    <location>
        <position position="37"/>
    </location>
    <ligand>
        <name>Zn(2+)</name>
        <dbReference type="ChEBI" id="CHEBI:29105"/>
        <label>1</label>
        <note>catalytic</note>
    </ligand>
</feature>
<feature type="binding site" evidence="1">
    <location>
        <position position="58"/>
    </location>
    <ligand>
        <name>Zn(2+)</name>
        <dbReference type="ChEBI" id="CHEBI:29105"/>
        <label>1</label>
        <note>catalytic</note>
    </ligand>
</feature>
<feature type="binding site" evidence="1">
    <location>
        <position position="89"/>
    </location>
    <ligand>
        <name>Zn(2+)</name>
        <dbReference type="ChEBI" id="CHEBI:29105"/>
        <label>2</label>
    </ligand>
</feature>
<feature type="binding site" evidence="1">
    <location>
        <position position="92"/>
    </location>
    <ligand>
        <name>Zn(2+)</name>
        <dbReference type="ChEBI" id="CHEBI:29105"/>
        <label>2</label>
    </ligand>
</feature>
<feature type="binding site" evidence="1">
    <location>
        <position position="95"/>
    </location>
    <ligand>
        <name>Zn(2+)</name>
        <dbReference type="ChEBI" id="CHEBI:29105"/>
        <label>2</label>
    </ligand>
</feature>
<feature type="binding site" evidence="1">
    <location>
        <position position="103"/>
    </location>
    <ligand>
        <name>Zn(2+)</name>
        <dbReference type="ChEBI" id="CHEBI:29105"/>
        <label>2</label>
    </ligand>
</feature>
<feature type="binding site" evidence="1">
    <location>
        <position position="145"/>
    </location>
    <ligand>
        <name>Zn(2+)</name>
        <dbReference type="ChEBI" id="CHEBI:29105"/>
        <label>1</label>
        <note>catalytic</note>
    </ligand>
</feature>
<name>ADH_STAAW</name>
<keyword id="KW-0479">Metal-binding</keyword>
<keyword id="KW-0520">NAD</keyword>
<keyword id="KW-0560">Oxidoreductase</keyword>
<keyword id="KW-0862">Zinc</keyword>
<reference key="1">
    <citation type="journal article" date="2002" name="Lancet">
        <title>Genome and virulence determinants of high virulence community-acquired MRSA.</title>
        <authorList>
            <person name="Baba T."/>
            <person name="Takeuchi F."/>
            <person name="Kuroda M."/>
            <person name="Yuzawa H."/>
            <person name="Aoki K."/>
            <person name="Oguchi A."/>
            <person name="Nagai Y."/>
            <person name="Iwama N."/>
            <person name="Asano K."/>
            <person name="Naimi T."/>
            <person name="Kuroda H."/>
            <person name="Cui L."/>
            <person name="Yamamoto K."/>
            <person name="Hiramatsu K."/>
        </authorList>
    </citation>
    <scope>NUCLEOTIDE SEQUENCE [LARGE SCALE GENOMIC DNA]</scope>
    <source>
        <strain>MW2</strain>
    </source>
</reference>
<dbReference type="EC" id="1.1.1.1"/>
<dbReference type="EMBL" id="BA000033">
    <property type="protein sequence ID" value="BAB94433.1"/>
    <property type="molecule type" value="Genomic_DNA"/>
</dbReference>
<dbReference type="SMR" id="Q8NXU1"/>
<dbReference type="KEGG" id="sam:MW0568"/>
<dbReference type="HOGENOM" id="CLU_026673_20_1_9"/>
<dbReference type="GO" id="GO:0004022">
    <property type="term" value="F:alcohol dehydrogenase (NAD+) activity"/>
    <property type="evidence" value="ECO:0007669"/>
    <property type="project" value="UniProtKB-EC"/>
</dbReference>
<dbReference type="GO" id="GO:0008270">
    <property type="term" value="F:zinc ion binding"/>
    <property type="evidence" value="ECO:0007669"/>
    <property type="project" value="InterPro"/>
</dbReference>
<dbReference type="CDD" id="cd08297">
    <property type="entry name" value="CAD3"/>
    <property type="match status" value="1"/>
</dbReference>
<dbReference type="FunFam" id="3.40.50.720:FF:000039">
    <property type="entry name" value="Alcohol dehydrogenase AdhP"/>
    <property type="match status" value="1"/>
</dbReference>
<dbReference type="Gene3D" id="3.90.180.10">
    <property type="entry name" value="Medium-chain alcohol dehydrogenases, catalytic domain"/>
    <property type="match status" value="1"/>
</dbReference>
<dbReference type="Gene3D" id="3.40.50.720">
    <property type="entry name" value="NAD(P)-binding Rossmann-like Domain"/>
    <property type="match status" value="1"/>
</dbReference>
<dbReference type="InterPro" id="IPR013149">
    <property type="entry name" value="ADH-like_C"/>
</dbReference>
<dbReference type="InterPro" id="IPR013154">
    <property type="entry name" value="ADH-like_N"/>
</dbReference>
<dbReference type="InterPro" id="IPR002328">
    <property type="entry name" value="ADH_Zn_CS"/>
</dbReference>
<dbReference type="InterPro" id="IPR029752">
    <property type="entry name" value="D-isomer_DH_CS1"/>
</dbReference>
<dbReference type="InterPro" id="IPR011032">
    <property type="entry name" value="GroES-like_sf"/>
</dbReference>
<dbReference type="InterPro" id="IPR036291">
    <property type="entry name" value="NAD(P)-bd_dom_sf"/>
</dbReference>
<dbReference type="InterPro" id="IPR020843">
    <property type="entry name" value="PKS_ER"/>
</dbReference>
<dbReference type="NCBIfam" id="NF006940">
    <property type="entry name" value="PRK09422.1"/>
    <property type="match status" value="1"/>
</dbReference>
<dbReference type="PANTHER" id="PTHR42940">
    <property type="entry name" value="ALCOHOL DEHYDROGENASE 1-RELATED"/>
    <property type="match status" value="1"/>
</dbReference>
<dbReference type="PANTHER" id="PTHR42940:SF8">
    <property type="entry name" value="VACUOLAR PROTEIN SORTING-ASSOCIATED PROTEIN 11"/>
    <property type="match status" value="1"/>
</dbReference>
<dbReference type="Pfam" id="PF08240">
    <property type="entry name" value="ADH_N"/>
    <property type="match status" value="1"/>
</dbReference>
<dbReference type="Pfam" id="PF00107">
    <property type="entry name" value="ADH_zinc_N"/>
    <property type="match status" value="1"/>
</dbReference>
<dbReference type="SMART" id="SM00829">
    <property type="entry name" value="PKS_ER"/>
    <property type="match status" value="1"/>
</dbReference>
<dbReference type="SUPFAM" id="SSF50129">
    <property type="entry name" value="GroES-like"/>
    <property type="match status" value="1"/>
</dbReference>
<dbReference type="SUPFAM" id="SSF51735">
    <property type="entry name" value="NAD(P)-binding Rossmann-fold domains"/>
    <property type="match status" value="1"/>
</dbReference>
<dbReference type="PROSITE" id="PS00059">
    <property type="entry name" value="ADH_ZINC"/>
    <property type="match status" value="1"/>
</dbReference>
<organism>
    <name type="scientific">Staphylococcus aureus (strain MW2)</name>
    <dbReference type="NCBI Taxonomy" id="196620"/>
    <lineage>
        <taxon>Bacteria</taxon>
        <taxon>Bacillati</taxon>
        <taxon>Bacillota</taxon>
        <taxon>Bacilli</taxon>
        <taxon>Bacillales</taxon>
        <taxon>Staphylococcaceae</taxon>
        <taxon>Staphylococcus</taxon>
    </lineage>
</organism>
<protein>
    <recommendedName>
        <fullName>Alcohol dehydrogenase</fullName>
        <shortName>ADH</shortName>
        <ecNumber>1.1.1.1</ecNumber>
    </recommendedName>
</protein>
<proteinExistence type="inferred from homology"/>
<comment type="catalytic activity">
    <reaction>
        <text>a primary alcohol + NAD(+) = an aldehyde + NADH + H(+)</text>
        <dbReference type="Rhea" id="RHEA:10736"/>
        <dbReference type="ChEBI" id="CHEBI:15378"/>
        <dbReference type="ChEBI" id="CHEBI:15734"/>
        <dbReference type="ChEBI" id="CHEBI:17478"/>
        <dbReference type="ChEBI" id="CHEBI:57540"/>
        <dbReference type="ChEBI" id="CHEBI:57945"/>
        <dbReference type="EC" id="1.1.1.1"/>
    </reaction>
</comment>
<comment type="catalytic activity">
    <reaction>
        <text>a secondary alcohol + NAD(+) = a ketone + NADH + H(+)</text>
        <dbReference type="Rhea" id="RHEA:10740"/>
        <dbReference type="ChEBI" id="CHEBI:15378"/>
        <dbReference type="ChEBI" id="CHEBI:17087"/>
        <dbReference type="ChEBI" id="CHEBI:35681"/>
        <dbReference type="ChEBI" id="CHEBI:57540"/>
        <dbReference type="ChEBI" id="CHEBI:57945"/>
        <dbReference type="EC" id="1.1.1.1"/>
    </reaction>
</comment>
<comment type="cofactor">
    <cofactor evidence="1">
        <name>Zn(2+)</name>
        <dbReference type="ChEBI" id="CHEBI:29105"/>
    </cofactor>
    <text evidence="1">Binds 2 Zn(2+) ions per subunit.</text>
</comment>
<comment type="similarity">
    <text evidence="2">Belongs to the zinc-containing alcohol dehydrogenase family.</text>
</comment>
<accession>Q8NXU1</accession>
<gene>
    <name type="primary">adh</name>
    <name type="ordered locus">MW0568</name>
</gene>